<gene>
    <name evidence="1" type="primary">rplN</name>
    <name type="ordered locus">LIC_12863</name>
</gene>
<organism>
    <name type="scientific">Leptospira interrogans serogroup Icterohaemorrhagiae serovar copenhageni (strain Fiocruz L1-130)</name>
    <dbReference type="NCBI Taxonomy" id="267671"/>
    <lineage>
        <taxon>Bacteria</taxon>
        <taxon>Pseudomonadati</taxon>
        <taxon>Spirochaetota</taxon>
        <taxon>Spirochaetia</taxon>
        <taxon>Leptospirales</taxon>
        <taxon>Leptospiraceae</taxon>
        <taxon>Leptospira</taxon>
    </lineage>
</organism>
<protein>
    <recommendedName>
        <fullName evidence="1">Large ribosomal subunit protein uL14</fullName>
    </recommendedName>
    <alternativeName>
        <fullName evidence="2">50S ribosomal protein L14</fullName>
    </alternativeName>
</protein>
<keyword id="KW-0687">Ribonucleoprotein</keyword>
<keyword id="KW-0689">Ribosomal protein</keyword>
<keyword id="KW-0694">RNA-binding</keyword>
<keyword id="KW-0699">rRNA-binding</keyword>
<dbReference type="EMBL" id="AE016823">
    <property type="protein sequence ID" value="AAS71416.1"/>
    <property type="status" value="ALT_INIT"/>
    <property type="molecule type" value="Genomic_DNA"/>
</dbReference>
<dbReference type="RefSeq" id="WP_000615917.1">
    <property type="nucleotide sequence ID" value="NC_005823.1"/>
</dbReference>
<dbReference type="SMR" id="Q72NH1"/>
<dbReference type="GeneID" id="61142737"/>
<dbReference type="KEGG" id="lic:LIC_12863"/>
<dbReference type="HOGENOM" id="CLU_095071_2_1_12"/>
<dbReference type="Proteomes" id="UP000007037">
    <property type="component" value="Chromosome I"/>
</dbReference>
<dbReference type="GO" id="GO:0022625">
    <property type="term" value="C:cytosolic large ribosomal subunit"/>
    <property type="evidence" value="ECO:0007669"/>
    <property type="project" value="TreeGrafter"/>
</dbReference>
<dbReference type="GO" id="GO:0070180">
    <property type="term" value="F:large ribosomal subunit rRNA binding"/>
    <property type="evidence" value="ECO:0007669"/>
    <property type="project" value="TreeGrafter"/>
</dbReference>
<dbReference type="GO" id="GO:0003735">
    <property type="term" value="F:structural constituent of ribosome"/>
    <property type="evidence" value="ECO:0007669"/>
    <property type="project" value="InterPro"/>
</dbReference>
<dbReference type="GO" id="GO:0006412">
    <property type="term" value="P:translation"/>
    <property type="evidence" value="ECO:0007669"/>
    <property type="project" value="UniProtKB-UniRule"/>
</dbReference>
<dbReference type="CDD" id="cd00337">
    <property type="entry name" value="Ribosomal_uL14"/>
    <property type="match status" value="1"/>
</dbReference>
<dbReference type="FunFam" id="2.40.150.20:FF:000001">
    <property type="entry name" value="50S ribosomal protein L14"/>
    <property type="match status" value="1"/>
</dbReference>
<dbReference type="Gene3D" id="2.40.150.20">
    <property type="entry name" value="Ribosomal protein L14"/>
    <property type="match status" value="1"/>
</dbReference>
<dbReference type="HAMAP" id="MF_01367">
    <property type="entry name" value="Ribosomal_uL14"/>
    <property type="match status" value="1"/>
</dbReference>
<dbReference type="InterPro" id="IPR000218">
    <property type="entry name" value="Ribosomal_uL14"/>
</dbReference>
<dbReference type="InterPro" id="IPR005745">
    <property type="entry name" value="Ribosomal_uL14_bac-type"/>
</dbReference>
<dbReference type="InterPro" id="IPR036853">
    <property type="entry name" value="Ribosomal_uL14_sf"/>
</dbReference>
<dbReference type="NCBIfam" id="TIGR01067">
    <property type="entry name" value="rplN_bact"/>
    <property type="match status" value="1"/>
</dbReference>
<dbReference type="PANTHER" id="PTHR11761">
    <property type="entry name" value="50S/60S RIBOSOMAL PROTEIN L14/L23"/>
    <property type="match status" value="1"/>
</dbReference>
<dbReference type="PANTHER" id="PTHR11761:SF3">
    <property type="entry name" value="LARGE RIBOSOMAL SUBUNIT PROTEIN UL14M"/>
    <property type="match status" value="1"/>
</dbReference>
<dbReference type="Pfam" id="PF00238">
    <property type="entry name" value="Ribosomal_L14"/>
    <property type="match status" value="1"/>
</dbReference>
<dbReference type="SMART" id="SM01374">
    <property type="entry name" value="Ribosomal_L14"/>
    <property type="match status" value="1"/>
</dbReference>
<dbReference type="SUPFAM" id="SSF50193">
    <property type="entry name" value="Ribosomal protein L14"/>
    <property type="match status" value="1"/>
</dbReference>
<feature type="chain" id="PRO_0000128546" description="Large ribosomal subunit protein uL14">
    <location>
        <begin position="1"/>
        <end position="130"/>
    </location>
</feature>
<proteinExistence type="inferred from homology"/>
<sequence length="130" mass="14281">MIQQETLLQVADNSGIKKVMCIKVLGGSKKRYASVGDEIIVAVKDAQPAFGLKDSTGKKVHNKAVQRAVVVRTTKEIRRPDGSYIRFDDNACAIIDDKGNPKGTRIFGPVARELRDKKYAKIISLAPEVL</sequence>
<name>RL14_LEPIC</name>
<comment type="function">
    <text evidence="1">Binds to 23S rRNA. Forms part of two intersubunit bridges in the 70S ribosome.</text>
</comment>
<comment type="subunit">
    <text evidence="1">Part of the 50S ribosomal subunit. Forms a cluster with proteins L3 and L19. In the 70S ribosome, L14 and L19 interact and together make contacts with the 16S rRNA in bridges B5 and B8.</text>
</comment>
<comment type="similarity">
    <text evidence="1">Belongs to the universal ribosomal protein uL14 family.</text>
</comment>
<comment type="sequence caution" evidence="2">
    <conflict type="erroneous initiation">
        <sequence resource="EMBL-CDS" id="AAS71416"/>
    </conflict>
</comment>
<reference key="1">
    <citation type="journal article" date="2004" name="J. Bacteriol.">
        <title>Comparative genomics of two Leptospira interrogans serovars reveals novel insights into physiology and pathogenesis.</title>
        <authorList>
            <person name="Nascimento A.L.T.O."/>
            <person name="Ko A.I."/>
            <person name="Martins E.A.L."/>
            <person name="Monteiro-Vitorello C.B."/>
            <person name="Ho P.L."/>
            <person name="Haake D.A."/>
            <person name="Verjovski-Almeida S."/>
            <person name="Hartskeerl R.A."/>
            <person name="Marques M.V."/>
            <person name="Oliveira M.C."/>
            <person name="Menck C.F.M."/>
            <person name="Leite L.C.C."/>
            <person name="Carrer H."/>
            <person name="Coutinho L.L."/>
            <person name="Degrave W.M."/>
            <person name="Dellagostin O.A."/>
            <person name="El-Dorry H."/>
            <person name="Ferro E.S."/>
            <person name="Ferro M.I.T."/>
            <person name="Furlan L.R."/>
            <person name="Gamberini M."/>
            <person name="Giglioti E.A."/>
            <person name="Goes-Neto A."/>
            <person name="Goldman G.H."/>
            <person name="Goldman M.H.S."/>
            <person name="Harakava R."/>
            <person name="Jeronimo S.M.B."/>
            <person name="Junqueira-de-Azevedo I.L.M."/>
            <person name="Kimura E.T."/>
            <person name="Kuramae E.E."/>
            <person name="Lemos E.G.M."/>
            <person name="Lemos M.V.F."/>
            <person name="Marino C.L."/>
            <person name="Nunes L.R."/>
            <person name="de Oliveira R.C."/>
            <person name="Pereira G.G."/>
            <person name="Reis M.S."/>
            <person name="Schriefer A."/>
            <person name="Siqueira W.J."/>
            <person name="Sommer P."/>
            <person name="Tsai S.M."/>
            <person name="Simpson A.J.G."/>
            <person name="Ferro J.A."/>
            <person name="Camargo L.E.A."/>
            <person name="Kitajima J.P."/>
            <person name="Setubal J.C."/>
            <person name="Van Sluys M.A."/>
        </authorList>
    </citation>
    <scope>NUCLEOTIDE SEQUENCE [LARGE SCALE GENOMIC DNA]</scope>
    <source>
        <strain>Fiocruz L1-130</strain>
    </source>
</reference>
<evidence type="ECO:0000255" key="1">
    <source>
        <dbReference type="HAMAP-Rule" id="MF_01367"/>
    </source>
</evidence>
<evidence type="ECO:0000305" key="2"/>
<accession>Q72NH1</accession>